<dbReference type="EMBL" id="CP000750">
    <property type="protein sequence ID" value="ABS01775.1"/>
    <property type="molecule type" value="Genomic_DNA"/>
</dbReference>
<dbReference type="RefSeq" id="WP_012085402.1">
    <property type="nucleotide sequence ID" value="NC_009664.2"/>
</dbReference>
<dbReference type="SMR" id="A6W4N6"/>
<dbReference type="STRING" id="266940.Krad_0285"/>
<dbReference type="KEGG" id="kra:Krad_0285"/>
<dbReference type="eggNOG" id="COG0199">
    <property type="taxonomic scope" value="Bacteria"/>
</dbReference>
<dbReference type="HOGENOM" id="CLU_139869_0_1_11"/>
<dbReference type="OrthoDB" id="9810484at2"/>
<dbReference type="Proteomes" id="UP000001116">
    <property type="component" value="Chromosome"/>
</dbReference>
<dbReference type="GO" id="GO:0015935">
    <property type="term" value="C:small ribosomal subunit"/>
    <property type="evidence" value="ECO:0007669"/>
    <property type="project" value="TreeGrafter"/>
</dbReference>
<dbReference type="GO" id="GO:0019843">
    <property type="term" value="F:rRNA binding"/>
    <property type="evidence" value="ECO:0007669"/>
    <property type="project" value="UniProtKB-UniRule"/>
</dbReference>
<dbReference type="GO" id="GO:0003735">
    <property type="term" value="F:structural constituent of ribosome"/>
    <property type="evidence" value="ECO:0007669"/>
    <property type="project" value="InterPro"/>
</dbReference>
<dbReference type="GO" id="GO:0006412">
    <property type="term" value="P:translation"/>
    <property type="evidence" value="ECO:0007669"/>
    <property type="project" value="UniProtKB-UniRule"/>
</dbReference>
<dbReference type="FunFam" id="1.10.287.1480:FF:000001">
    <property type="entry name" value="30S ribosomal protein S14"/>
    <property type="match status" value="1"/>
</dbReference>
<dbReference type="Gene3D" id="1.10.287.1480">
    <property type="match status" value="1"/>
</dbReference>
<dbReference type="HAMAP" id="MF_00537">
    <property type="entry name" value="Ribosomal_uS14_1"/>
    <property type="match status" value="1"/>
</dbReference>
<dbReference type="InterPro" id="IPR001209">
    <property type="entry name" value="Ribosomal_uS14"/>
</dbReference>
<dbReference type="InterPro" id="IPR023036">
    <property type="entry name" value="Ribosomal_uS14_bac/plastid"/>
</dbReference>
<dbReference type="NCBIfam" id="NF006477">
    <property type="entry name" value="PRK08881.1"/>
    <property type="match status" value="1"/>
</dbReference>
<dbReference type="PANTHER" id="PTHR19836">
    <property type="entry name" value="30S RIBOSOMAL PROTEIN S14"/>
    <property type="match status" value="1"/>
</dbReference>
<dbReference type="PANTHER" id="PTHR19836:SF23">
    <property type="entry name" value="SMALL RIBOSOMAL SUBUNIT PROTEIN US14A"/>
    <property type="match status" value="1"/>
</dbReference>
<dbReference type="Pfam" id="PF00253">
    <property type="entry name" value="Ribosomal_S14"/>
    <property type="match status" value="1"/>
</dbReference>
<dbReference type="SUPFAM" id="SSF57716">
    <property type="entry name" value="Glucocorticoid receptor-like (DNA-binding domain)"/>
    <property type="match status" value="1"/>
</dbReference>
<keyword id="KW-1185">Reference proteome</keyword>
<keyword id="KW-0687">Ribonucleoprotein</keyword>
<keyword id="KW-0689">Ribosomal protein</keyword>
<keyword id="KW-0694">RNA-binding</keyword>
<keyword id="KW-0699">rRNA-binding</keyword>
<organism>
    <name type="scientific">Kineococcus radiotolerans (strain ATCC BAA-149 / DSM 14245 / SRS30216)</name>
    <dbReference type="NCBI Taxonomy" id="266940"/>
    <lineage>
        <taxon>Bacteria</taxon>
        <taxon>Bacillati</taxon>
        <taxon>Actinomycetota</taxon>
        <taxon>Actinomycetes</taxon>
        <taxon>Kineosporiales</taxon>
        <taxon>Kineosporiaceae</taxon>
        <taxon>Kineococcus</taxon>
    </lineage>
</organism>
<feature type="chain" id="PRO_1000128425" description="Small ribosomal subunit protein uS14A">
    <location>
        <begin position="1"/>
        <end position="101"/>
    </location>
</feature>
<feature type="region of interest" description="Disordered" evidence="2">
    <location>
        <begin position="1"/>
        <end position="21"/>
    </location>
</feature>
<feature type="region of interest" description="Disordered" evidence="2">
    <location>
        <begin position="49"/>
        <end position="73"/>
    </location>
</feature>
<feature type="compositionally biased region" description="Basic and acidic residues" evidence="2">
    <location>
        <begin position="8"/>
        <end position="21"/>
    </location>
</feature>
<feature type="compositionally biased region" description="Basic and acidic residues" evidence="2">
    <location>
        <begin position="61"/>
        <end position="70"/>
    </location>
</feature>
<comment type="function">
    <text evidence="1">Binds 16S rRNA, required for the assembly of 30S particles and may also be responsible for determining the conformation of the 16S rRNA at the A site.</text>
</comment>
<comment type="subunit">
    <text evidence="1">Part of the 30S ribosomal subunit. Contacts proteins S3 and S10.</text>
</comment>
<comment type="similarity">
    <text evidence="1">Belongs to the universal ribosomal protein uS14 family.</text>
</comment>
<protein>
    <recommendedName>
        <fullName evidence="1">Small ribosomal subunit protein uS14A</fullName>
    </recommendedName>
    <alternativeName>
        <fullName evidence="3">30S ribosomal protein S14</fullName>
    </alternativeName>
</protein>
<name>RS14_KINRD</name>
<proteinExistence type="inferred from homology"/>
<sequence>MAKKSKIAKNEQRKEVVAHHAARRAELKRTAVAVTAGEEERAAARLALQRLPRDASPTRVRNRDAADGRPRGTLRKFGLSRIRVREMAHAGELPGVTKSSW</sequence>
<reference key="1">
    <citation type="journal article" date="2008" name="PLoS ONE">
        <title>Survival in nuclear waste, extreme resistance, and potential applications gleaned from the genome sequence of Kineococcus radiotolerans SRS30216.</title>
        <authorList>
            <person name="Bagwell C.E."/>
            <person name="Bhat S."/>
            <person name="Hawkins G.M."/>
            <person name="Smith B.W."/>
            <person name="Biswas T."/>
            <person name="Hoover T.R."/>
            <person name="Saunders E."/>
            <person name="Han C.S."/>
            <person name="Tsodikov O.V."/>
            <person name="Shimkets L.J."/>
        </authorList>
    </citation>
    <scope>NUCLEOTIDE SEQUENCE [LARGE SCALE GENOMIC DNA]</scope>
    <source>
        <strain>ATCC BAA-149 / DSM 14245 / SRS30216</strain>
    </source>
</reference>
<gene>
    <name evidence="1" type="primary">rpsN</name>
    <name type="ordered locus">Krad_0285</name>
</gene>
<accession>A6W4N6</accession>
<evidence type="ECO:0000255" key="1">
    <source>
        <dbReference type="HAMAP-Rule" id="MF_00537"/>
    </source>
</evidence>
<evidence type="ECO:0000256" key="2">
    <source>
        <dbReference type="SAM" id="MobiDB-lite"/>
    </source>
</evidence>
<evidence type="ECO:0000305" key="3"/>